<keyword id="KW-0067">ATP-binding</keyword>
<keyword id="KW-0418">Kinase</keyword>
<keyword id="KW-0460">Magnesium</keyword>
<keyword id="KW-0479">Metal-binding</keyword>
<keyword id="KW-0547">Nucleotide-binding</keyword>
<keyword id="KW-0597">Phosphoprotein</keyword>
<keyword id="KW-1185">Reference proteome</keyword>
<keyword id="KW-0723">Serine/threonine-protein kinase</keyword>
<keyword id="KW-0808">Transferase</keyword>
<protein>
    <recommendedName>
        <fullName>Serine/threonine-protein kinase SIK3 homolog</fullName>
        <ecNumber>2.7.11.1</ecNumber>
    </recommendedName>
    <alternativeName>
        <fullName>Serine/threonine-protein kinase QSK homolog</fullName>
    </alternativeName>
</protein>
<proteinExistence type="evidence at transcript level"/>
<accession>Q6NSM8</accession>
<accession>Q6PHV1</accession>
<evidence type="ECO:0000250" key="1"/>
<evidence type="ECO:0000255" key="2">
    <source>
        <dbReference type="PROSITE-ProRule" id="PRU00159"/>
    </source>
</evidence>
<evidence type="ECO:0000255" key="3">
    <source>
        <dbReference type="PROSITE-ProRule" id="PRU00212"/>
    </source>
</evidence>
<evidence type="ECO:0000255" key="4">
    <source>
        <dbReference type="PROSITE-ProRule" id="PRU10027"/>
    </source>
</evidence>
<evidence type="ECO:0000256" key="5">
    <source>
        <dbReference type="SAM" id="MobiDB-lite"/>
    </source>
</evidence>
<evidence type="ECO:0000305" key="6"/>
<feature type="chain" id="PRO_0000252259" description="Serine/threonine-protein kinase SIK3 homolog">
    <location>
        <begin position="1"/>
        <end position="1187"/>
    </location>
</feature>
<feature type="domain" description="Protein kinase" evidence="2">
    <location>
        <begin position="59"/>
        <end position="310"/>
    </location>
</feature>
<feature type="domain" description="UBA" evidence="3">
    <location>
        <begin position="337"/>
        <end position="377"/>
    </location>
</feature>
<feature type="region of interest" description="Disordered" evidence="5">
    <location>
        <begin position="1"/>
        <end position="41"/>
    </location>
</feature>
<feature type="region of interest" description="Disordered" evidence="5">
    <location>
        <begin position="548"/>
        <end position="587"/>
    </location>
</feature>
<feature type="region of interest" description="Disordered" evidence="5">
    <location>
        <begin position="697"/>
        <end position="776"/>
    </location>
</feature>
<feature type="region of interest" description="Disordered" evidence="5">
    <location>
        <begin position="1060"/>
        <end position="1092"/>
    </location>
</feature>
<feature type="compositionally biased region" description="Low complexity" evidence="5">
    <location>
        <begin position="1"/>
        <end position="15"/>
    </location>
</feature>
<feature type="compositionally biased region" description="Acidic residues" evidence="5">
    <location>
        <begin position="570"/>
        <end position="581"/>
    </location>
</feature>
<feature type="compositionally biased region" description="Polar residues" evidence="5">
    <location>
        <begin position="739"/>
        <end position="749"/>
    </location>
</feature>
<feature type="active site" description="Proton acceptor" evidence="2 4">
    <location>
        <position position="181"/>
    </location>
</feature>
<feature type="binding site" evidence="2">
    <location>
        <begin position="65"/>
        <end position="73"/>
    </location>
    <ligand>
        <name>ATP</name>
        <dbReference type="ChEBI" id="CHEBI:30616"/>
    </ligand>
</feature>
<feature type="binding site" evidence="2">
    <location>
        <position position="88"/>
    </location>
    <ligand>
        <name>ATP</name>
        <dbReference type="ChEBI" id="CHEBI:30616"/>
    </ligand>
</feature>
<feature type="modified residue" description="Phosphothreonine" evidence="1">
    <location>
        <position position="214"/>
    </location>
</feature>
<feature type="modified residue" description="Phosphoserine" evidence="1">
    <location>
        <position position="218"/>
    </location>
</feature>
<feature type="sequence conflict" description="In Ref. 1; AAH56316." evidence="6" ref="1">
    <original>Q</original>
    <variation>QQQ</variation>
    <location>
        <position position="31"/>
    </location>
</feature>
<feature type="sequence conflict" description="In Ref. 1; AAH56316." evidence="6" ref="1">
    <original>V</original>
    <variation>G</variation>
    <location>
        <position position="40"/>
    </location>
</feature>
<feature type="sequence conflict" description="In Ref. 1; AAH56316." evidence="6" ref="1">
    <original>Q</original>
    <variation>H</variation>
    <location>
        <position position="358"/>
    </location>
</feature>
<feature type="sequence conflict" description="In Ref. 1; AAH56316." evidence="6" ref="1">
    <original>A</original>
    <variation>T</variation>
    <location>
        <position position="1021"/>
    </location>
</feature>
<feature type="sequence conflict" description="In Ref. 1; AAH56316." evidence="6" ref="1">
    <original>T</original>
    <variation>A</variation>
    <location>
        <position position="1080"/>
    </location>
</feature>
<feature type="sequence conflict" description="In Ref. 1; AAH56316." evidence="6" ref="1">
    <original>V</original>
    <variation>A</variation>
    <location>
        <position position="1148"/>
    </location>
</feature>
<name>SIK3_DANRE</name>
<organism>
    <name type="scientific">Danio rerio</name>
    <name type="common">Zebrafish</name>
    <name type="synonym">Brachydanio rerio</name>
    <dbReference type="NCBI Taxonomy" id="7955"/>
    <lineage>
        <taxon>Eukaryota</taxon>
        <taxon>Metazoa</taxon>
        <taxon>Chordata</taxon>
        <taxon>Craniata</taxon>
        <taxon>Vertebrata</taxon>
        <taxon>Euteleostomi</taxon>
        <taxon>Actinopterygii</taxon>
        <taxon>Neopterygii</taxon>
        <taxon>Teleostei</taxon>
        <taxon>Ostariophysi</taxon>
        <taxon>Cypriniformes</taxon>
        <taxon>Danionidae</taxon>
        <taxon>Danioninae</taxon>
        <taxon>Danio</taxon>
    </lineage>
</organism>
<comment type="catalytic activity">
    <reaction>
        <text>L-seryl-[protein] + ATP = O-phospho-L-seryl-[protein] + ADP + H(+)</text>
        <dbReference type="Rhea" id="RHEA:17989"/>
        <dbReference type="Rhea" id="RHEA-COMP:9863"/>
        <dbReference type="Rhea" id="RHEA-COMP:11604"/>
        <dbReference type="ChEBI" id="CHEBI:15378"/>
        <dbReference type="ChEBI" id="CHEBI:29999"/>
        <dbReference type="ChEBI" id="CHEBI:30616"/>
        <dbReference type="ChEBI" id="CHEBI:83421"/>
        <dbReference type="ChEBI" id="CHEBI:456216"/>
        <dbReference type="EC" id="2.7.11.1"/>
    </reaction>
</comment>
<comment type="catalytic activity">
    <reaction>
        <text>L-threonyl-[protein] + ATP = O-phospho-L-threonyl-[protein] + ADP + H(+)</text>
        <dbReference type="Rhea" id="RHEA:46608"/>
        <dbReference type="Rhea" id="RHEA-COMP:11060"/>
        <dbReference type="Rhea" id="RHEA-COMP:11605"/>
        <dbReference type="ChEBI" id="CHEBI:15378"/>
        <dbReference type="ChEBI" id="CHEBI:30013"/>
        <dbReference type="ChEBI" id="CHEBI:30616"/>
        <dbReference type="ChEBI" id="CHEBI:61977"/>
        <dbReference type="ChEBI" id="CHEBI:456216"/>
        <dbReference type="EC" id="2.7.11.1"/>
    </reaction>
</comment>
<comment type="cofactor">
    <cofactor evidence="1">
        <name>Mg(2+)</name>
        <dbReference type="ChEBI" id="CHEBI:18420"/>
    </cofactor>
</comment>
<comment type="similarity">
    <text evidence="6">Belongs to the protein kinase superfamily. CAMK Ser/Thr protein kinase family. SNF1 subfamily.</text>
</comment>
<gene>
    <name type="ORF">zgc:66101</name>
</gene>
<reference key="1">
    <citation type="submission" date="2004-05" db="EMBL/GenBank/DDBJ databases">
        <authorList>
            <consortium name="NIH - Zebrafish Gene Collection (ZGC) project"/>
        </authorList>
    </citation>
    <scope>NUCLEOTIDE SEQUENCE [LARGE SCALE MRNA]</scope>
    <source>
        <tissue>Embryo</tissue>
    </source>
</reference>
<dbReference type="EC" id="2.7.11.1"/>
<dbReference type="EMBL" id="BC056316">
    <property type="protein sequence ID" value="AAH56316.1"/>
    <property type="molecule type" value="mRNA"/>
</dbReference>
<dbReference type="EMBL" id="BC070022">
    <property type="protein sequence ID" value="AAH70022.1"/>
    <property type="molecule type" value="mRNA"/>
</dbReference>
<dbReference type="RefSeq" id="NP_956835.1">
    <property type="nucleotide sequence ID" value="NM_200541.1"/>
</dbReference>
<dbReference type="SMR" id="Q6NSM8"/>
<dbReference type="FunCoup" id="Q6NSM8">
    <property type="interactions" value="1456"/>
</dbReference>
<dbReference type="STRING" id="7955.ENSDARP00000106696"/>
<dbReference type="GeneID" id="393513"/>
<dbReference type="KEGG" id="dre:393513"/>
<dbReference type="AGR" id="ZFIN:ZDB-GENE-140106-203"/>
<dbReference type="CTD" id="23387"/>
<dbReference type="ZFIN" id="ZDB-GENE-140106-203">
    <property type="gene designation" value="sik3"/>
</dbReference>
<dbReference type="eggNOG" id="KOG0586">
    <property type="taxonomic scope" value="Eukaryota"/>
</dbReference>
<dbReference type="InParanoid" id="Q6NSM8"/>
<dbReference type="OrthoDB" id="10045473at2759"/>
<dbReference type="PhylomeDB" id="Q6NSM8"/>
<dbReference type="PRO" id="PR:Q6NSM8"/>
<dbReference type="Proteomes" id="UP000000437">
    <property type="component" value="Chromosome 15"/>
</dbReference>
<dbReference type="GO" id="GO:0005737">
    <property type="term" value="C:cytoplasm"/>
    <property type="evidence" value="ECO:0000318"/>
    <property type="project" value="GO_Central"/>
</dbReference>
<dbReference type="GO" id="GO:0005524">
    <property type="term" value="F:ATP binding"/>
    <property type="evidence" value="ECO:0000250"/>
    <property type="project" value="UniProtKB"/>
</dbReference>
<dbReference type="GO" id="GO:0000287">
    <property type="term" value="F:magnesium ion binding"/>
    <property type="evidence" value="ECO:0000250"/>
    <property type="project" value="UniProtKB"/>
</dbReference>
<dbReference type="GO" id="GO:0106310">
    <property type="term" value="F:protein serine kinase activity"/>
    <property type="evidence" value="ECO:0007669"/>
    <property type="project" value="RHEA"/>
</dbReference>
<dbReference type="GO" id="GO:0004674">
    <property type="term" value="F:protein serine/threonine kinase activity"/>
    <property type="evidence" value="ECO:0000250"/>
    <property type="project" value="UniProtKB"/>
</dbReference>
<dbReference type="GO" id="GO:0050321">
    <property type="term" value="F:tau-protein kinase activity"/>
    <property type="evidence" value="ECO:0000318"/>
    <property type="project" value="GO_Central"/>
</dbReference>
<dbReference type="GO" id="GO:0035556">
    <property type="term" value="P:intracellular signal transduction"/>
    <property type="evidence" value="ECO:0000318"/>
    <property type="project" value="GO_Central"/>
</dbReference>
<dbReference type="GO" id="GO:0000226">
    <property type="term" value="P:microtubule cytoskeleton organization"/>
    <property type="evidence" value="ECO:0000318"/>
    <property type="project" value="GO_Central"/>
</dbReference>
<dbReference type="GO" id="GO:0006468">
    <property type="term" value="P:protein phosphorylation"/>
    <property type="evidence" value="ECO:0000250"/>
    <property type="project" value="UniProtKB"/>
</dbReference>
<dbReference type="CDD" id="cd14071">
    <property type="entry name" value="STKc_SIK"/>
    <property type="match status" value="1"/>
</dbReference>
<dbReference type="CDD" id="cd14410">
    <property type="entry name" value="UBA_SIK3"/>
    <property type="match status" value="1"/>
</dbReference>
<dbReference type="FunFam" id="3.30.200.20:FF:000003">
    <property type="entry name" value="Non-specific serine/threonine protein kinase"/>
    <property type="match status" value="1"/>
</dbReference>
<dbReference type="FunFam" id="1.10.510.10:FF:000156">
    <property type="entry name" value="Serine/threonine-protein kinase SIK3 homolog"/>
    <property type="match status" value="1"/>
</dbReference>
<dbReference type="Gene3D" id="1.10.510.10">
    <property type="entry name" value="Transferase(Phosphotransferase) domain 1"/>
    <property type="match status" value="1"/>
</dbReference>
<dbReference type="InterPro" id="IPR011009">
    <property type="entry name" value="Kinase-like_dom_sf"/>
</dbReference>
<dbReference type="InterPro" id="IPR000719">
    <property type="entry name" value="Prot_kinase_dom"/>
</dbReference>
<dbReference type="InterPro" id="IPR017441">
    <property type="entry name" value="Protein_kinase_ATP_BS"/>
</dbReference>
<dbReference type="InterPro" id="IPR008271">
    <property type="entry name" value="Ser/Thr_kinase_AS"/>
</dbReference>
<dbReference type="InterPro" id="IPR034672">
    <property type="entry name" value="SIK"/>
</dbReference>
<dbReference type="InterPro" id="IPR015940">
    <property type="entry name" value="UBA"/>
</dbReference>
<dbReference type="PANTHER" id="PTHR24346">
    <property type="entry name" value="MAP/MICROTUBULE AFFINITY-REGULATING KINASE"/>
    <property type="match status" value="1"/>
</dbReference>
<dbReference type="PANTHER" id="PTHR24346:SF42">
    <property type="entry name" value="SERINE_THREONINE-PROTEIN KINASE SIK3"/>
    <property type="match status" value="1"/>
</dbReference>
<dbReference type="Pfam" id="PF00069">
    <property type="entry name" value="Pkinase"/>
    <property type="match status" value="1"/>
</dbReference>
<dbReference type="Pfam" id="PF23312">
    <property type="entry name" value="UBA_SIK3"/>
    <property type="match status" value="1"/>
</dbReference>
<dbReference type="SMART" id="SM00220">
    <property type="entry name" value="S_TKc"/>
    <property type="match status" value="1"/>
</dbReference>
<dbReference type="SMART" id="SM00165">
    <property type="entry name" value="UBA"/>
    <property type="match status" value="1"/>
</dbReference>
<dbReference type="SUPFAM" id="SSF56112">
    <property type="entry name" value="Protein kinase-like (PK-like)"/>
    <property type="match status" value="1"/>
</dbReference>
<dbReference type="PROSITE" id="PS00107">
    <property type="entry name" value="PROTEIN_KINASE_ATP"/>
    <property type="match status" value="1"/>
</dbReference>
<dbReference type="PROSITE" id="PS50011">
    <property type="entry name" value="PROTEIN_KINASE_DOM"/>
    <property type="match status" value="1"/>
</dbReference>
<dbReference type="PROSITE" id="PS00108">
    <property type="entry name" value="PROTEIN_KINASE_ST"/>
    <property type="match status" value="1"/>
</dbReference>
<dbReference type="PROSITE" id="PS50030">
    <property type="entry name" value="UBA"/>
    <property type="match status" value="1"/>
</dbReference>
<sequence>MAAVSSGAAAAAGIPNPNPNRERPQQQQQQQPASAALHPVAHRSAAAACRPPLARVGYYEMERTIGKGNFAVVKLATHMITKAKVAIKIVDKTQLDDENLKKIFREVQIMKMLRHPHIIRLYQVMETERMIYLVTEYASGGEIFDHLVAHGRMAEKDARRKFKQIVAAVYFCHCRSIVHRDLKAENLLLDHNLNIKIADFGFSNLFSRGQLLKTWCGSPPYAAPELFEGKEYDGPKVDIWSLGVVLYVLVCGALPFDGSTLQNLRARVLSGKFRIPFFMSTDCEYLIRHMLILEPSRRLSMEQICKNKWMRQGDPDPEFDRLIVECEQVKVERETELINEQVLMAMAEMGFDRERTLQSLHADSYDHYSATYSLLSDKLKRHKNLCVAPPTPRPLYPLQDQSNAVSMTVPQVQLINPENQIVETDGPMALDSDEGEEPSPEAMARYLSMRRHTVGVPDPRAEMQEDLQKLAPGFPRVAPQAPFPPLMPALAQMQLMPTPSLQPGQQLEYKEQSLLQPPTLQLLNGMGPLGRRASDGGANIQLHTQQLLKRPRGQSPLVTSPHPIPAVAPVDEEGSDAEPDPEAVQRSSYKDCNTLHLPMERFSPVRRFSDGAATIQAYKTQLENNSLIRQLKQECEQLQKMYAAPQDERLMEHTQQQHVLYQQEQQILHQQIQALSLGHGENQPSSHLTYQLQRLRIQPSSPPPTHPSNHLFRPANQSSPPPPGGGAGLMQTHGGPSAVQYQHGSALYQSPSDSPPPTSLPRMALANQQPSVPPGSARTLAQTLPQQQVTIQVQEVELGGGAQRQSFLATPCHRVLGKQLSADNAETHSRSLSRFHTSAYEQLTAQLLGESVMGSYNPYLQGASLKVPGLEGYGLSYGGPSALQQALLSPTPLEYRPPPQVTPTLQGLLSPRHSLTGHADPRLPPQELAALLKRHSRPAPPTAPPTIPQDYGEMLLLQQLGQAAESLDSAPPQATPTQHYHHLLQIRTPPECPAPSLPHSESMEEDEMPAYHEGLLAKAAAPCTEAHELLAPPLGSTPPYSSPTHRHAYLRSATATRESCADAADAGMESDHNGYGSRSTQSDSYRPRGALQRHHTIQTCDDAYEQVEPMSGMSLLAGKALSSARMSDILSQSSLTGSQQLQQREGPVCDVDADVHSSSCYPSSCTTDMLLSYKTPDLQYSVEQAGV</sequence>